<name>NEPI_ECO57</name>
<feature type="chain" id="PRO_0000294109" description="Purine ribonucleoside efflux pump NepI">
    <location>
        <begin position="1"/>
        <end position="396"/>
    </location>
</feature>
<feature type="topological domain" description="Cytoplasmic" evidence="1">
    <location>
        <begin position="1"/>
        <end position="21"/>
    </location>
</feature>
<feature type="transmembrane region" description="Helical" evidence="1">
    <location>
        <begin position="22"/>
        <end position="42"/>
    </location>
</feature>
<feature type="topological domain" description="Periplasmic" evidence="1">
    <location>
        <begin position="43"/>
        <end position="54"/>
    </location>
</feature>
<feature type="transmembrane region" description="Helical" evidence="1">
    <location>
        <begin position="55"/>
        <end position="75"/>
    </location>
</feature>
<feature type="topological domain" description="Cytoplasmic" evidence="1">
    <location>
        <begin position="76"/>
        <end position="85"/>
    </location>
</feature>
<feature type="transmembrane region" description="Helical" evidence="1">
    <location>
        <begin position="86"/>
        <end position="106"/>
    </location>
</feature>
<feature type="topological domain" description="Periplasmic" evidence="1">
    <location>
        <position position="107"/>
    </location>
</feature>
<feature type="transmembrane region" description="Helical" evidence="1">
    <location>
        <begin position="108"/>
        <end position="128"/>
    </location>
</feature>
<feature type="topological domain" description="Cytoplasmic" evidence="1">
    <location>
        <begin position="129"/>
        <end position="147"/>
    </location>
</feature>
<feature type="transmembrane region" description="Helical" evidence="1">
    <location>
        <begin position="148"/>
        <end position="168"/>
    </location>
</feature>
<feature type="topological domain" description="Periplasmic" evidence="1">
    <location>
        <begin position="169"/>
        <end position="175"/>
    </location>
</feature>
<feature type="transmembrane region" description="Helical" evidence="1">
    <location>
        <begin position="176"/>
        <end position="196"/>
    </location>
</feature>
<feature type="topological domain" description="Cytoplasmic" evidence="1">
    <location>
        <begin position="197"/>
        <end position="215"/>
    </location>
</feature>
<feature type="transmembrane region" description="Helical" evidence="1">
    <location>
        <begin position="216"/>
        <end position="236"/>
    </location>
</feature>
<feature type="topological domain" description="Periplasmic" evidence="1">
    <location>
        <begin position="237"/>
        <end position="255"/>
    </location>
</feature>
<feature type="transmembrane region" description="Helical" evidence="1">
    <location>
        <begin position="256"/>
        <end position="276"/>
    </location>
</feature>
<feature type="topological domain" description="Cytoplasmic" evidence="1">
    <location>
        <begin position="277"/>
        <end position="281"/>
    </location>
</feature>
<feature type="transmembrane region" description="Helical" evidence="1">
    <location>
        <begin position="282"/>
        <end position="302"/>
    </location>
</feature>
<feature type="topological domain" description="Periplasmic" evidence="1">
    <location>
        <begin position="303"/>
        <end position="305"/>
    </location>
</feature>
<feature type="transmembrane region" description="Helical" evidence="1">
    <location>
        <begin position="306"/>
        <end position="326"/>
    </location>
</feature>
<feature type="topological domain" description="Cytoplasmic" evidence="1">
    <location>
        <begin position="327"/>
        <end position="343"/>
    </location>
</feature>
<feature type="transmembrane region" description="Helical" evidence="1">
    <location>
        <begin position="344"/>
        <end position="364"/>
    </location>
</feature>
<feature type="topological domain" description="Periplasmic" evidence="1">
    <location>
        <begin position="365"/>
        <end position="366"/>
    </location>
</feature>
<feature type="transmembrane region" description="Helical" evidence="1">
    <location>
        <begin position="367"/>
        <end position="387"/>
    </location>
</feature>
<feature type="topological domain" description="Cytoplasmic" evidence="1">
    <location>
        <begin position="388"/>
        <end position="396"/>
    </location>
</feature>
<gene>
    <name evidence="1" type="primary">nepI</name>
    <name type="ordered locus">Z5149</name>
    <name type="ordered locus">ECs4596</name>
</gene>
<comment type="function">
    <text evidence="1">Involved in the efflux of purine ribonucleosides, such as inosine and guanosine.</text>
</comment>
<comment type="catalytic activity">
    <reaction evidence="1">
        <text>inosine(in) + H(+)(out) = inosine(out) + H(+)(in)</text>
        <dbReference type="Rhea" id="RHEA:29211"/>
        <dbReference type="ChEBI" id="CHEBI:15378"/>
        <dbReference type="ChEBI" id="CHEBI:17596"/>
    </reaction>
    <physiologicalReaction direction="left-to-right" evidence="1">
        <dbReference type="Rhea" id="RHEA:29212"/>
    </physiologicalReaction>
</comment>
<comment type="catalytic activity">
    <reaction evidence="1">
        <text>guanosine(in) + H(+)(out) = guanosine(out) + H(+)(in)</text>
        <dbReference type="Rhea" id="RHEA:29583"/>
        <dbReference type="ChEBI" id="CHEBI:15378"/>
        <dbReference type="ChEBI" id="CHEBI:16750"/>
    </reaction>
    <physiologicalReaction direction="left-to-right" evidence="1">
        <dbReference type="Rhea" id="RHEA:29584"/>
    </physiologicalReaction>
</comment>
<comment type="subcellular location">
    <subcellularLocation>
        <location evidence="1">Cell inner membrane</location>
        <topology evidence="1">Multi-pass membrane protein</topology>
    </subcellularLocation>
</comment>
<comment type="similarity">
    <text evidence="1">Belongs to the major facilitator superfamily. DHA1 family. NepI (TC 2.A.1.2.26) subfamily.</text>
</comment>
<comment type="sequence caution" evidence="2">
    <conflict type="erroneous initiation">
        <sequence resource="EMBL-CDS" id="AAG58858"/>
    </conflict>
</comment>
<comment type="sequence caution" evidence="2">
    <conflict type="erroneous initiation">
        <sequence resource="EMBL-CDS" id="BAB38019"/>
    </conflict>
</comment>
<reference key="1">
    <citation type="journal article" date="2001" name="Nature">
        <title>Genome sequence of enterohaemorrhagic Escherichia coli O157:H7.</title>
        <authorList>
            <person name="Perna N.T."/>
            <person name="Plunkett G. III"/>
            <person name="Burland V."/>
            <person name="Mau B."/>
            <person name="Glasner J.D."/>
            <person name="Rose D.J."/>
            <person name="Mayhew G.F."/>
            <person name="Evans P.S."/>
            <person name="Gregor J."/>
            <person name="Kirkpatrick H.A."/>
            <person name="Posfai G."/>
            <person name="Hackett J."/>
            <person name="Klink S."/>
            <person name="Boutin A."/>
            <person name="Shao Y."/>
            <person name="Miller L."/>
            <person name="Grotbeck E.J."/>
            <person name="Davis N.W."/>
            <person name="Lim A."/>
            <person name="Dimalanta E.T."/>
            <person name="Potamousis K."/>
            <person name="Apodaca J."/>
            <person name="Anantharaman T.S."/>
            <person name="Lin J."/>
            <person name="Yen G."/>
            <person name="Schwartz D.C."/>
            <person name="Welch R.A."/>
            <person name="Blattner F.R."/>
        </authorList>
    </citation>
    <scope>NUCLEOTIDE SEQUENCE [LARGE SCALE GENOMIC DNA]</scope>
    <source>
        <strain>O157:H7 / EDL933 / ATCC 700927 / EHEC</strain>
    </source>
</reference>
<reference key="2">
    <citation type="journal article" date="2001" name="DNA Res.">
        <title>Complete genome sequence of enterohemorrhagic Escherichia coli O157:H7 and genomic comparison with a laboratory strain K-12.</title>
        <authorList>
            <person name="Hayashi T."/>
            <person name="Makino K."/>
            <person name="Ohnishi M."/>
            <person name="Kurokawa K."/>
            <person name="Ishii K."/>
            <person name="Yokoyama K."/>
            <person name="Han C.-G."/>
            <person name="Ohtsubo E."/>
            <person name="Nakayama K."/>
            <person name="Murata T."/>
            <person name="Tanaka M."/>
            <person name="Tobe T."/>
            <person name="Iida T."/>
            <person name="Takami H."/>
            <person name="Honda T."/>
            <person name="Sasakawa C."/>
            <person name="Ogasawara N."/>
            <person name="Yasunaga T."/>
            <person name="Kuhara S."/>
            <person name="Shiba T."/>
            <person name="Hattori M."/>
            <person name="Shinagawa H."/>
        </authorList>
    </citation>
    <scope>NUCLEOTIDE SEQUENCE [LARGE SCALE GENOMIC DNA]</scope>
    <source>
        <strain>O157:H7 / Sakai / RIMD 0509952 / EHEC</strain>
    </source>
</reference>
<evidence type="ECO:0000255" key="1">
    <source>
        <dbReference type="HAMAP-Rule" id="MF_01189"/>
    </source>
</evidence>
<evidence type="ECO:0000305" key="2"/>
<accession>Q8XC49</accession>
<accession>Q7A9M0</accession>
<protein>
    <recommendedName>
        <fullName evidence="1">Purine ribonucleoside efflux pump NepI</fullName>
    </recommendedName>
</protein>
<dbReference type="EMBL" id="AE005174">
    <property type="protein sequence ID" value="AAG58858.1"/>
    <property type="status" value="ALT_INIT"/>
    <property type="molecule type" value="Genomic_DNA"/>
</dbReference>
<dbReference type="EMBL" id="BA000007">
    <property type="protein sequence ID" value="BAB38019.1"/>
    <property type="status" value="ALT_INIT"/>
    <property type="molecule type" value="Genomic_DNA"/>
</dbReference>
<dbReference type="PIR" id="D91203">
    <property type="entry name" value="D91203"/>
</dbReference>
<dbReference type="PIR" id="F86049">
    <property type="entry name" value="F86049"/>
</dbReference>
<dbReference type="RefSeq" id="NP_312623.2">
    <property type="nucleotide sequence ID" value="NC_002695.1"/>
</dbReference>
<dbReference type="RefSeq" id="WP_001288545.1">
    <property type="nucleotide sequence ID" value="NZ_VOAI01000011.1"/>
</dbReference>
<dbReference type="SMR" id="Q8XC49"/>
<dbReference type="STRING" id="155864.Z5149"/>
<dbReference type="GeneID" id="915429"/>
<dbReference type="KEGG" id="ece:Z5149"/>
<dbReference type="KEGG" id="ecs:ECs_4596"/>
<dbReference type="PATRIC" id="fig|386585.9.peg.4804"/>
<dbReference type="eggNOG" id="COG2814">
    <property type="taxonomic scope" value="Bacteria"/>
</dbReference>
<dbReference type="HOGENOM" id="CLU_001265_61_1_6"/>
<dbReference type="OMA" id="HFAGSVY"/>
<dbReference type="Proteomes" id="UP000000558">
    <property type="component" value="Chromosome"/>
</dbReference>
<dbReference type="Proteomes" id="UP000002519">
    <property type="component" value="Chromosome"/>
</dbReference>
<dbReference type="GO" id="GO:0005886">
    <property type="term" value="C:plasma membrane"/>
    <property type="evidence" value="ECO:0007669"/>
    <property type="project" value="UniProtKB-SubCell"/>
</dbReference>
<dbReference type="GO" id="GO:0015297">
    <property type="term" value="F:antiporter activity"/>
    <property type="evidence" value="ECO:0007669"/>
    <property type="project" value="UniProtKB-KW"/>
</dbReference>
<dbReference type="GO" id="GO:0015211">
    <property type="term" value="F:purine nucleoside transmembrane transporter activity"/>
    <property type="evidence" value="ECO:0007669"/>
    <property type="project" value="UniProtKB-UniRule"/>
</dbReference>
<dbReference type="CDD" id="cd17324">
    <property type="entry name" value="MFS_NepI_like"/>
    <property type="match status" value="1"/>
</dbReference>
<dbReference type="FunFam" id="1.20.1250.20:FF:000113">
    <property type="entry name" value="Purine ribonucleoside efflux pump NepI"/>
    <property type="match status" value="1"/>
</dbReference>
<dbReference type="Gene3D" id="1.20.1250.20">
    <property type="entry name" value="MFS general substrate transporter like domains"/>
    <property type="match status" value="1"/>
</dbReference>
<dbReference type="HAMAP" id="MF_01189">
    <property type="entry name" value="MFS_NepI"/>
    <property type="match status" value="1"/>
</dbReference>
<dbReference type="InterPro" id="IPR011701">
    <property type="entry name" value="MFS"/>
</dbReference>
<dbReference type="InterPro" id="IPR020846">
    <property type="entry name" value="MFS_dom"/>
</dbReference>
<dbReference type="InterPro" id="IPR050189">
    <property type="entry name" value="MFS_Efflux_Transporters"/>
</dbReference>
<dbReference type="InterPro" id="IPR023680">
    <property type="entry name" value="MFS_NepI"/>
</dbReference>
<dbReference type="InterPro" id="IPR036259">
    <property type="entry name" value="MFS_trans_sf"/>
</dbReference>
<dbReference type="NCBIfam" id="NF007578">
    <property type="entry name" value="PRK10213.1"/>
    <property type="match status" value="1"/>
</dbReference>
<dbReference type="PANTHER" id="PTHR43124">
    <property type="entry name" value="PURINE EFFLUX PUMP PBUE"/>
    <property type="match status" value="1"/>
</dbReference>
<dbReference type="PANTHER" id="PTHR43124:SF5">
    <property type="entry name" value="PURINE RIBONUCLEOSIDE EFFLUX PUMP NEPI"/>
    <property type="match status" value="1"/>
</dbReference>
<dbReference type="Pfam" id="PF07690">
    <property type="entry name" value="MFS_1"/>
    <property type="match status" value="1"/>
</dbReference>
<dbReference type="SUPFAM" id="SSF103473">
    <property type="entry name" value="MFS general substrate transporter"/>
    <property type="match status" value="1"/>
</dbReference>
<dbReference type="PROSITE" id="PS50850">
    <property type="entry name" value="MFS"/>
    <property type="match status" value="1"/>
</dbReference>
<organism>
    <name type="scientific">Escherichia coli O157:H7</name>
    <dbReference type="NCBI Taxonomy" id="83334"/>
    <lineage>
        <taxon>Bacteria</taxon>
        <taxon>Pseudomonadati</taxon>
        <taxon>Pseudomonadota</taxon>
        <taxon>Gammaproteobacteria</taxon>
        <taxon>Enterobacterales</taxon>
        <taxon>Enterobacteriaceae</taxon>
        <taxon>Escherichia</taxon>
    </lineage>
</organism>
<sequence length="396" mass="41851">MSEFIAENRGADAITRPNWSAVFSVAFCVACLIIVEFLPVSLLTPMAQDLGISEGVAGQSVTVTAFVAMFASLFITQTIQATDRRYVVILFAVLLTLSCLLVSFANSFSLLLIGRACLGLALGGFWAMSASLTMRLVPPRTVPKALSVIFGAVSIALVIAAPLGCFLGELIGWRNVFNAAAAMGVLCIFWIIKSLPSLPGEPSHQKQNTFRLLQRPGVMAGMIAIFMSFAGQFAFFTYIRPVYMTLAGFGVDGLTLVLLSFGIASFVGTSLSSFILKRSVKLALAGAPFVLALSALVLTLWGSDKIVATGVAIIWGLTFALIPVGWSTWITRSLADQAEKAGSIQVAVIQLANTCGAAIGGYALDNIGLTSPLMLSGTLMLLTALLVTAKVKMKKS</sequence>
<keyword id="KW-0050">Antiport</keyword>
<keyword id="KW-0997">Cell inner membrane</keyword>
<keyword id="KW-1003">Cell membrane</keyword>
<keyword id="KW-0472">Membrane</keyword>
<keyword id="KW-1185">Reference proteome</keyword>
<keyword id="KW-0812">Transmembrane</keyword>
<keyword id="KW-1133">Transmembrane helix</keyword>
<keyword id="KW-0813">Transport</keyword>
<proteinExistence type="inferred from homology"/>